<dbReference type="EC" id="3.6.4.13"/>
<dbReference type="EMBL" id="CM002236">
    <property type="protein sequence ID" value="EAA29185.2"/>
    <property type="molecule type" value="Genomic_DNA"/>
</dbReference>
<dbReference type="RefSeq" id="XP_958421.2">
    <property type="nucleotide sequence ID" value="XM_953328.3"/>
</dbReference>
<dbReference type="SMR" id="Q7RV88"/>
<dbReference type="FunCoup" id="Q7RV88">
    <property type="interactions" value="1187"/>
</dbReference>
<dbReference type="STRING" id="367110.Q7RV88"/>
<dbReference type="PaxDb" id="5141-EFNCRP00000007323"/>
<dbReference type="EnsemblFungi" id="EAA29185">
    <property type="protein sequence ID" value="EAA29185"/>
    <property type="gene ID" value="NCU07420"/>
</dbReference>
<dbReference type="GeneID" id="3874573"/>
<dbReference type="KEGG" id="ncr:NCU07420"/>
<dbReference type="VEuPathDB" id="FungiDB:NCU07420"/>
<dbReference type="HOGENOM" id="CLU_003041_1_0_1"/>
<dbReference type="InParanoid" id="Q7RV88"/>
<dbReference type="OMA" id="FGCQALV"/>
<dbReference type="OrthoDB" id="10265785at2759"/>
<dbReference type="Proteomes" id="UP000001805">
    <property type="component" value="Chromosome 1, Linkage Group I"/>
</dbReference>
<dbReference type="GO" id="GO:0010494">
    <property type="term" value="C:cytoplasmic stress granule"/>
    <property type="evidence" value="ECO:0000318"/>
    <property type="project" value="GO_Central"/>
</dbReference>
<dbReference type="GO" id="GO:0005524">
    <property type="term" value="F:ATP binding"/>
    <property type="evidence" value="ECO:0007669"/>
    <property type="project" value="UniProtKB-KW"/>
</dbReference>
<dbReference type="GO" id="GO:0016887">
    <property type="term" value="F:ATP hydrolysis activity"/>
    <property type="evidence" value="ECO:0007669"/>
    <property type="project" value="RHEA"/>
</dbReference>
<dbReference type="GO" id="GO:0003723">
    <property type="term" value="F:RNA binding"/>
    <property type="evidence" value="ECO:0007669"/>
    <property type="project" value="UniProtKB-KW"/>
</dbReference>
<dbReference type="GO" id="GO:0003724">
    <property type="term" value="F:RNA helicase activity"/>
    <property type="evidence" value="ECO:0007669"/>
    <property type="project" value="UniProtKB-EC"/>
</dbReference>
<dbReference type="GO" id="GO:0003743">
    <property type="term" value="F:translation initiation factor activity"/>
    <property type="evidence" value="ECO:0000318"/>
    <property type="project" value="GO_Central"/>
</dbReference>
<dbReference type="GO" id="GO:0002183">
    <property type="term" value="P:cytoplasmic translational initiation"/>
    <property type="evidence" value="ECO:0000318"/>
    <property type="project" value="GO_Central"/>
</dbReference>
<dbReference type="CDD" id="cd18046">
    <property type="entry name" value="DEADc_EIF4AII_EIF4AI_DDX2"/>
    <property type="match status" value="1"/>
</dbReference>
<dbReference type="CDD" id="cd18787">
    <property type="entry name" value="SF2_C_DEAD"/>
    <property type="match status" value="1"/>
</dbReference>
<dbReference type="FunFam" id="3.40.50.300:FF:000089">
    <property type="entry name" value="Eukaryotic initiation factor 4A-II"/>
    <property type="match status" value="1"/>
</dbReference>
<dbReference type="FunFam" id="3.40.50.300:FF:000031">
    <property type="entry name" value="Eukaryotic initiation factor 4A-III"/>
    <property type="match status" value="1"/>
</dbReference>
<dbReference type="Gene3D" id="3.40.50.300">
    <property type="entry name" value="P-loop containing nucleotide triphosphate hydrolases"/>
    <property type="match status" value="2"/>
</dbReference>
<dbReference type="InterPro" id="IPR011545">
    <property type="entry name" value="DEAD/DEAH_box_helicase_dom"/>
</dbReference>
<dbReference type="InterPro" id="IPR044728">
    <property type="entry name" value="EIF4A_DEADc"/>
</dbReference>
<dbReference type="InterPro" id="IPR014001">
    <property type="entry name" value="Helicase_ATP-bd"/>
</dbReference>
<dbReference type="InterPro" id="IPR001650">
    <property type="entry name" value="Helicase_C-like"/>
</dbReference>
<dbReference type="InterPro" id="IPR027417">
    <property type="entry name" value="P-loop_NTPase"/>
</dbReference>
<dbReference type="InterPro" id="IPR000629">
    <property type="entry name" value="RNA-helicase_DEAD-box_CS"/>
</dbReference>
<dbReference type="InterPro" id="IPR014014">
    <property type="entry name" value="RNA_helicase_DEAD_Q_motif"/>
</dbReference>
<dbReference type="PANTHER" id="PTHR47958">
    <property type="entry name" value="ATP-DEPENDENT RNA HELICASE DBP3"/>
    <property type="match status" value="1"/>
</dbReference>
<dbReference type="Pfam" id="PF00270">
    <property type="entry name" value="DEAD"/>
    <property type="match status" value="1"/>
</dbReference>
<dbReference type="Pfam" id="PF00271">
    <property type="entry name" value="Helicase_C"/>
    <property type="match status" value="1"/>
</dbReference>
<dbReference type="SMART" id="SM00487">
    <property type="entry name" value="DEXDc"/>
    <property type="match status" value="1"/>
</dbReference>
<dbReference type="SMART" id="SM00490">
    <property type="entry name" value="HELICc"/>
    <property type="match status" value="1"/>
</dbReference>
<dbReference type="SUPFAM" id="SSF52540">
    <property type="entry name" value="P-loop containing nucleoside triphosphate hydrolases"/>
    <property type="match status" value="1"/>
</dbReference>
<dbReference type="PROSITE" id="PS00039">
    <property type="entry name" value="DEAD_ATP_HELICASE"/>
    <property type="match status" value="1"/>
</dbReference>
<dbReference type="PROSITE" id="PS51192">
    <property type="entry name" value="HELICASE_ATP_BIND_1"/>
    <property type="match status" value="1"/>
</dbReference>
<dbReference type="PROSITE" id="PS51194">
    <property type="entry name" value="HELICASE_CTER"/>
    <property type="match status" value="1"/>
</dbReference>
<dbReference type="PROSITE" id="PS51195">
    <property type="entry name" value="Q_MOTIF"/>
    <property type="match status" value="1"/>
</dbReference>
<gene>
    <name type="primary">tif-1</name>
    <name type="synonym">tif-41</name>
    <name type="ORF">NCU07420</name>
</gene>
<proteinExistence type="inferred from homology"/>
<name>IF4A_NEUCR</name>
<organism>
    <name type="scientific">Neurospora crassa (strain ATCC 24698 / 74-OR23-1A / CBS 708.71 / DSM 1257 / FGSC 987)</name>
    <dbReference type="NCBI Taxonomy" id="367110"/>
    <lineage>
        <taxon>Eukaryota</taxon>
        <taxon>Fungi</taxon>
        <taxon>Dikarya</taxon>
        <taxon>Ascomycota</taxon>
        <taxon>Pezizomycotina</taxon>
        <taxon>Sordariomycetes</taxon>
        <taxon>Sordariomycetidae</taxon>
        <taxon>Sordariales</taxon>
        <taxon>Sordariaceae</taxon>
        <taxon>Neurospora</taxon>
    </lineage>
</organism>
<evidence type="ECO:0000250" key="1"/>
<evidence type="ECO:0000255" key="2">
    <source>
        <dbReference type="PROSITE-ProRule" id="PRU00541"/>
    </source>
</evidence>
<evidence type="ECO:0000255" key="3">
    <source>
        <dbReference type="PROSITE-ProRule" id="PRU00542"/>
    </source>
</evidence>
<evidence type="ECO:0000305" key="4"/>
<keyword id="KW-0067">ATP-binding</keyword>
<keyword id="KW-0963">Cytoplasm</keyword>
<keyword id="KW-0347">Helicase</keyword>
<keyword id="KW-0378">Hydrolase</keyword>
<keyword id="KW-0396">Initiation factor</keyword>
<keyword id="KW-0547">Nucleotide-binding</keyword>
<keyword id="KW-0648">Protein biosynthesis</keyword>
<keyword id="KW-1185">Reference proteome</keyword>
<keyword id="KW-0694">RNA-binding</keyword>
<protein>
    <recommendedName>
        <fullName>ATP-dependent RNA helicase eIF4A</fullName>
        <ecNumber>3.6.4.13</ecNumber>
    </recommendedName>
    <alternativeName>
        <fullName>Eukaryotic initiation factor 4A</fullName>
        <shortName>eIF-4A</shortName>
    </alternativeName>
    <alternativeName>
        <fullName>Translation initiation factor 1</fullName>
    </alternativeName>
</protein>
<feature type="chain" id="PRO_0000232138" description="ATP-dependent RNA helicase eIF4A">
    <location>
        <begin position="1"/>
        <end position="397"/>
    </location>
</feature>
<feature type="domain" description="Helicase ATP-binding" evidence="2">
    <location>
        <begin position="55"/>
        <end position="225"/>
    </location>
</feature>
<feature type="domain" description="Helicase C-terminal" evidence="3">
    <location>
        <begin position="236"/>
        <end position="397"/>
    </location>
</feature>
<feature type="short sequence motif" description="Q motif">
    <location>
        <begin position="24"/>
        <end position="52"/>
    </location>
</feature>
<feature type="short sequence motif" description="DEAD box">
    <location>
        <begin position="173"/>
        <end position="176"/>
    </location>
</feature>
<feature type="binding site" evidence="2">
    <location>
        <begin position="68"/>
        <end position="75"/>
    </location>
    <ligand>
        <name>ATP</name>
        <dbReference type="ChEBI" id="CHEBI:30616"/>
    </ligand>
</feature>
<comment type="function">
    <text evidence="1">ATP-dependent RNA helicase which is a subunit of the eIF4F complex involved in cap recognition and is required for mRNA binding to ribosome. In the current model of translation initiation, eIF4A unwinds RNA secondary structures in the 5'-UTR of mRNAs which is necessary to allow efficient binding of the small ribosomal subunit, and subsequent scanning for the initiator codon (By similarity).</text>
</comment>
<comment type="catalytic activity">
    <reaction>
        <text>ATP + H2O = ADP + phosphate + H(+)</text>
        <dbReference type="Rhea" id="RHEA:13065"/>
        <dbReference type="ChEBI" id="CHEBI:15377"/>
        <dbReference type="ChEBI" id="CHEBI:15378"/>
        <dbReference type="ChEBI" id="CHEBI:30616"/>
        <dbReference type="ChEBI" id="CHEBI:43474"/>
        <dbReference type="ChEBI" id="CHEBI:456216"/>
        <dbReference type="EC" id="3.6.4.13"/>
    </reaction>
</comment>
<comment type="subunit">
    <text evidence="1">Component of the eIF4F complex, which composition varies with external and internal environmental conditions. It is composed of at least eIF4A, eIF4E and eIF4G (By similarity).</text>
</comment>
<comment type="subcellular location">
    <subcellularLocation>
        <location evidence="1">Cytoplasm</location>
    </subcellularLocation>
</comment>
<comment type="domain">
    <text>The Q motif is unique to and characteristic of the DEAD box family of RNA helicases and controls ATP binding and hydrolysis.</text>
</comment>
<comment type="similarity">
    <text evidence="4">Belongs to the DEAD box helicase family. eIF4A subfamily.</text>
</comment>
<reference key="1">
    <citation type="journal article" date="2003" name="Nature">
        <title>The genome sequence of the filamentous fungus Neurospora crassa.</title>
        <authorList>
            <person name="Galagan J.E."/>
            <person name="Calvo S.E."/>
            <person name="Borkovich K.A."/>
            <person name="Selker E.U."/>
            <person name="Read N.D."/>
            <person name="Jaffe D.B."/>
            <person name="FitzHugh W."/>
            <person name="Ma L.-J."/>
            <person name="Smirnov S."/>
            <person name="Purcell S."/>
            <person name="Rehman B."/>
            <person name="Elkins T."/>
            <person name="Engels R."/>
            <person name="Wang S."/>
            <person name="Nielsen C.B."/>
            <person name="Butler J."/>
            <person name="Endrizzi M."/>
            <person name="Qui D."/>
            <person name="Ianakiev P."/>
            <person name="Bell-Pedersen D."/>
            <person name="Nelson M.A."/>
            <person name="Werner-Washburne M."/>
            <person name="Selitrennikoff C.P."/>
            <person name="Kinsey J.A."/>
            <person name="Braun E.L."/>
            <person name="Zelter A."/>
            <person name="Schulte U."/>
            <person name="Kothe G.O."/>
            <person name="Jedd G."/>
            <person name="Mewes H.-W."/>
            <person name="Staben C."/>
            <person name="Marcotte E."/>
            <person name="Greenberg D."/>
            <person name="Roy A."/>
            <person name="Foley K."/>
            <person name="Naylor J."/>
            <person name="Stange-Thomann N."/>
            <person name="Barrett R."/>
            <person name="Gnerre S."/>
            <person name="Kamal M."/>
            <person name="Kamvysselis M."/>
            <person name="Mauceli E.W."/>
            <person name="Bielke C."/>
            <person name="Rudd S."/>
            <person name="Frishman D."/>
            <person name="Krystofova S."/>
            <person name="Rasmussen C."/>
            <person name="Metzenberg R.L."/>
            <person name="Perkins D.D."/>
            <person name="Kroken S."/>
            <person name="Cogoni C."/>
            <person name="Macino G."/>
            <person name="Catcheside D.E.A."/>
            <person name="Li W."/>
            <person name="Pratt R.J."/>
            <person name="Osmani S.A."/>
            <person name="DeSouza C.P.C."/>
            <person name="Glass N.L."/>
            <person name="Orbach M.J."/>
            <person name="Berglund J.A."/>
            <person name="Voelker R."/>
            <person name="Yarden O."/>
            <person name="Plamann M."/>
            <person name="Seiler S."/>
            <person name="Dunlap J.C."/>
            <person name="Radford A."/>
            <person name="Aramayo R."/>
            <person name="Natvig D.O."/>
            <person name="Alex L.A."/>
            <person name="Mannhaupt G."/>
            <person name="Ebbole D.J."/>
            <person name="Freitag M."/>
            <person name="Paulsen I."/>
            <person name="Sachs M.S."/>
            <person name="Lander E.S."/>
            <person name="Nusbaum C."/>
            <person name="Birren B.W."/>
        </authorList>
    </citation>
    <scope>NUCLEOTIDE SEQUENCE [LARGE SCALE GENOMIC DNA]</scope>
    <source>
        <strain>ATCC 24698 / 74-OR23-1A / CBS 708.71 / DSM 1257 / FGSC 987</strain>
    </source>
</reference>
<sequence>MATDKGLEDIPEGQIESNYDETVDSFDEMNLKPELLRGIYAYGFERPSAIQQRAIMPVIKGHDVIAQAQSGTGKTATFSISVLQKIDPSLKACQALILAPTRELAQQIQKVVVAIGDFMNIECHACIGGTSVRDDMKALQDGPQVVVGTPGRVHDMIQRRFLKTDSMKMFVLDEADEMLSRGFTEQIYDIFQLLPQSTQVVLLSATMPQDVLEVTTKFMREPVRILVKKDELTLEGIKQFYIAVEKEEWKLDTLSDLYETVTITQAVIFCNTRRKVDWLTDKLTARDFTVSAMHGDMDQAQRDLIMKEFRSGSSRVLIATDLLARGIDVQQVSLVINYDLPANRENYIHRIGRGGRFGRKGVAINFVTADDVRMMREIEQFYSTQIEEMPMNVADLI</sequence>
<accession>Q7RV88</accession>